<comment type="function">
    <text evidence="4 6 7 8 10 11 13 14 15">Protein transport (PubMed:17329360, PubMed:17827179, PubMed:18833296, PubMed:21835342, PubMed:22928698, PubMed:33704067, PubMed:9685396). Regulator of membrane traffic from the Golgi apparatus towards the endoplasmic reticulum (ER) (PubMed:21795785). Mediates membrane trafficking during egg chamber growth and organization, possibly upstream of exocyst component Sec5. Also during oogenesis, plays a role, together with BicD but independently of Sec5, in the polarization of the oocyte microtubule cytoskeleton, in the localization of oskar mRNA and in the anterodorsal secretion of grk. Required for anterograde opsin transport through the ER-Golgi complex. Plays a role, together with Rich, in regulating CadN transport in photoreceptor cells which is required for the formation of normal synaptic connections between axons from the inner photoreceptor cells in the eye and postsynaptic cells in the brain medulla layer M6 (PubMed:21835342). Necessary for proper development of bristle shafts of macrochaete and microchaete on the head, thorax and scutellum. Modulates Notch signaling (PubMed:10459009). As a key regulator of vesicular traffic, plays a critical role in the regulation of actin organization and is required for normal rates of phagocytic uptake during phagocytosis involved in defense against viral and fungal infection.</text>
</comment>
<comment type="subunit">
    <text evidence="6 7 9 11 13 14">Interacts with Rich and Act5C (PubMed:21835342, PubMed:22928698). Interacts with BicD (via C-terminal domain) (PubMed:17329360, PubMed:17827179). Interacts (in GTP-bound) with GCC1/CG10703 and cbs (PubMed:19001129). Interacts with Gorab (via C-terminus); binds to a Gorab homodimer, this interaction seems to be required for trans-Golgi localization of Gorab (PubMed:33704067).</text>
</comment>
<comment type="subcellular location">
    <subcellularLocation>
        <location evidence="7 11 12">Golgi apparatus membrane</location>
    </subcellularLocation>
    <subcellularLocation>
        <location evidence="7 11 12">Synapse</location>
    </subcellularLocation>
    <subcellularLocation>
        <location evidence="7 11 12">Perikaryon</location>
    </subcellularLocation>
    <text evidence="7 11 12">Colocalizes with Rich at the Golgi apparatus. During oogenesis, first accumulates transiently in a central position during stages 7-8, then is uniformly distributed at the beginning of stage 9 to end up juxtaposed to the entire oocyte cortex.</text>
</comment>
<comment type="tissue specificity">
    <text evidence="11 12">Expressed in larval eye, wing and leg imaginal disks and in salivary gland. Expressed in the larval optic lobe, showing an enrichment in the neuropil. In the adult brain, expressed in photoreceptors and mushroom body.</text>
</comment>
<comment type="disruption phenotype">
    <text evidence="4 11">Larval lethal.</text>
</comment>
<comment type="similarity">
    <text evidence="2">Belongs to the small GTPase superfamily. Rab family.</text>
</comment>
<dbReference type="EMBL" id="D84314">
    <property type="protein sequence ID" value="BAA21707.1"/>
    <property type="molecule type" value="mRNA"/>
</dbReference>
<dbReference type="EMBL" id="AE014134">
    <property type="protein sequence ID" value="AAF53168.1"/>
    <property type="molecule type" value="Genomic_DNA"/>
</dbReference>
<dbReference type="EMBL" id="AY060261">
    <property type="protein sequence ID" value="AAL25300.1"/>
    <property type="molecule type" value="mRNA"/>
</dbReference>
<dbReference type="RefSeq" id="NP_001285869.1">
    <property type="nucleotide sequence ID" value="NM_001298940.1"/>
</dbReference>
<dbReference type="RefSeq" id="NP_477172.1">
    <property type="nucleotide sequence ID" value="NM_057824.5"/>
</dbReference>
<dbReference type="PDB" id="2Y8E">
    <property type="method" value="X-ray"/>
    <property type="resolution" value="1.39 A"/>
    <property type="chains" value="A/B=1-177"/>
</dbReference>
<dbReference type="PDBsum" id="2Y8E"/>
<dbReference type="SMR" id="O18334"/>
<dbReference type="BioGRID" id="60686">
    <property type="interactions" value="87"/>
</dbReference>
<dbReference type="FunCoup" id="O18334">
    <property type="interactions" value="974"/>
</dbReference>
<dbReference type="IntAct" id="O18334">
    <property type="interactions" value="23"/>
</dbReference>
<dbReference type="STRING" id="7227.FBpp0312096"/>
<dbReference type="PaxDb" id="7227-FBpp0079943"/>
<dbReference type="EnsemblMetazoa" id="FBtr0080361">
    <property type="protein sequence ID" value="FBpp0079943"/>
    <property type="gene ID" value="FBgn0015797"/>
</dbReference>
<dbReference type="EnsemblMetazoa" id="FBtr0346437">
    <property type="protein sequence ID" value="FBpp0312096"/>
    <property type="gene ID" value="FBgn0015797"/>
</dbReference>
<dbReference type="GeneID" id="34636"/>
<dbReference type="KEGG" id="dme:Dmel_CG6601"/>
<dbReference type="UCSC" id="CG6601-RA">
    <property type="organism name" value="d. melanogaster"/>
</dbReference>
<dbReference type="AGR" id="FB:FBgn0015797"/>
<dbReference type="CTD" id="34636"/>
<dbReference type="FlyBase" id="FBgn0015797">
    <property type="gene designation" value="Rab6"/>
</dbReference>
<dbReference type="VEuPathDB" id="VectorBase:FBgn0015797"/>
<dbReference type="eggNOG" id="KOG0094">
    <property type="taxonomic scope" value="Eukaryota"/>
</dbReference>
<dbReference type="HOGENOM" id="CLU_041217_10_2_1"/>
<dbReference type="InParanoid" id="O18334"/>
<dbReference type="OMA" id="NCFFRET"/>
<dbReference type="OrthoDB" id="63533at2759"/>
<dbReference type="PhylomeDB" id="O18334"/>
<dbReference type="Reactome" id="R-DME-6798695">
    <property type="pathway name" value="Neutrophil degranulation"/>
</dbReference>
<dbReference type="Reactome" id="R-DME-6811436">
    <property type="pathway name" value="COPI-independent Golgi-to-ER retrograde traffic"/>
</dbReference>
<dbReference type="Reactome" id="R-DME-6811438">
    <property type="pathway name" value="Intra-Golgi traffic"/>
</dbReference>
<dbReference type="Reactome" id="R-DME-6811440">
    <property type="pathway name" value="Retrograde transport at the Trans-Golgi-Network"/>
</dbReference>
<dbReference type="Reactome" id="R-DME-8854214">
    <property type="pathway name" value="TBC/RABGAPs"/>
</dbReference>
<dbReference type="Reactome" id="R-DME-8873719">
    <property type="pathway name" value="RAB geranylgeranylation"/>
</dbReference>
<dbReference type="Reactome" id="R-DME-8876198">
    <property type="pathway name" value="RAB GEFs exchange GTP for GDP on RABs"/>
</dbReference>
<dbReference type="BioGRID-ORCS" id="34636">
    <property type="hits" value="0 hits in 3 CRISPR screens"/>
</dbReference>
<dbReference type="EvolutionaryTrace" id="O18334"/>
<dbReference type="GenomeRNAi" id="34636"/>
<dbReference type="PRO" id="PR:O18334"/>
<dbReference type="Proteomes" id="UP000000803">
    <property type="component" value="Chromosome 2L"/>
</dbReference>
<dbReference type="Bgee" id="FBgn0015797">
    <property type="expression patterns" value="Expressed in adult posterior midgut class I enteroendocrine cell in adult midgut (Drosophila) and 224 other cell types or tissues"/>
</dbReference>
<dbReference type="ExpressionAtlas" id="O18334">
    <property type="expression patterns" value="baseline and differential"/>
</dbReference>
<dbReference type="GO" id="GO:0005776">
    <property type="term" value="C:autophagosome"/>
    <property type="evidence" value="ECO:0000314"/>
    <property type="project" value="FlyBase"/>
</dbReference>
<dbReference type="GO" id="GO:0031410">
    <property type="term" value="C:cytoplasmic vesicle"/>
    <property type="evidence" value="ECO:0000314"/>
    <property type="project" value="FlyBase"/>
</dbReference>
<dbReference type="GO" id="GO:0005829">
    <property type="term" value="C:cytosol"/>
    <property type="evidence" value="ECO:0007669"/>
    <property type="project" value="GOC"/>
</dbReference>
<dbReference type="GO" id="GO:0012505">
    <property type="term" value="C:endomembrane system"/>
    <property type="evidence" value="ECO:0000318"/>
    <property type="project" value="GO_Central"/>
</dbReference>
<dbReference type="GO" id="GO:0005794">
    <property type="term" value="C:Golgi apparatus"/>
    <property type="evidence" value="ECO:0000314"/>
    <property type="project" value="FlyBase"/>
</dbReference>
<dbReference type="GO" id="GO:0000139">
    <property type="term" value="C:Golgi membrane"/>
    <property type="evidence" value="ECO:0007669"/>
    <property type="project" value="UniProtKB-SubCell"/>
</dbReference>
<dbReference type="GO" id="GO:0005764">
    <property type="term" value="C:lysosome"/>
    <property type="evidence" value="ECO:0000314"/>
    <property type="project" value="FlyBase"/>
</dbReference>
<dbReference type="GO" id="GO:0043025">
    <property type="term" value="C:neuronal cell body"/>
    <property type="evidence" value="ECO:0007005"/>
    <property type="project" value="FlyBase"/>
</dbReference>
<dbReference type="GO" id="GO:0043204">
    <property type="term" value="C:perikaryon"/>
    <property type="evidence" value="ECO:0007669"/>
    <property type="project" value="UniProtKB-SubCell"/>
</dbReference>
<dbReference type="GO" id="GO:0045202">
    <property type="term" value="C:synapse"/>
    <property type="evidence" value="ECO:0007005"/>
    <property type="project" value="FlyBase"/>
</dbReference>
<dbReference type="GO" id="GO:0003779">
    <property type="term" value="F:actin binding"/>
    <property type="evidence" value="ECO:0007669"/>
    <property type="project" value="UniProtKB-KW"/>
</dbReference>
<dbReference type="GO" id="GO:0005525">
    <property type="term" value="F:GTP binding"/>
    <property type="evidence" value="ECO:0007669"/>
    <property type="project" value="UniProtKB-KW"/>
</dbReference>
<dbReference type="GO" id="GO:0003924">
    <property type="term" value="F:GTPase activity"/>
    <property type="evidence" value="ECO:0000314"/>
    <property type="project" value="FlyBase"/>
</dbReference>
<dbReference type="GO" id="GO:0007411">
    <property type="term" value="P:axon guidance"/>
    <property type="evidence" value="ECO:0000315"/>
    <property type="project" value="FlyBase"/>
</dbReference>
<dbReference type="GO" id="GO:0001745">
    <property type="term" value="P:compound eye morphogenesis"/>
    <property type="evidence" value="ECO:0000316"/>
    <property type="project" value="FlyBase"/>
</dbReference>
<dbReference type="GO" id="GO:0006887">
    <property type="term" value="P:exocytosis"/>
    <property type="evidence" value="ECO:0000315"/>
    <property type="project" value="FlyBase"/>
</dbReference>
<dbReference type="GO" id="GO:0007293">
    <property type="term" value="P:germarium-derived egg chamber formation"/>
    <property type="evidence" value="ECO:0000315"/>
    <property type="project" value="FlyBase"/>
</dbReference>
<dbReference type="GO" id="GO:0006891">
    <property type="term" value="P:intra-Golgi vesicle-mediated transport"/>
    <property type="evidence" value="ECO:0000318"/>
    <property type="project" value="GO_Central"/>
</dbReference>
<dbReference type="GO" id="GO:0006886">
    <property type="term" value="P:intracellular protein transport"/>
    <property type="evidence" value="ECO:0000318"/>
    <property type="project" value="GO_Central"/>
</dbReference>
<dbReference type="GO" id="GO:0008103">
    <property type="term" value="P:oocyte microtubule cytoskeleton polarization"/>
    <property type="evidence" value="ECO:0000315"/>
    <property type="project" value="FlyBase"/>
</dbReference>
<dbReference type="GO" id="GO:0007602">
    <property type="term" value="P:phototransduction"/>
    <property type="evidence" value="ECO:0000315"/>
    <property type="project" value="FlyBase"/>
</dbReference>
<dbReference type="GO" id="GO:0045451">
    <property type="term" value="P:pole plasm oskar mRNA localization"/>
    <property type="evidence" value="ECO:0000315"/>
    <property type="project" value="FlyBase"/>
</dbReference>
<dbReference type="GO" id="GO:0140450">
    <property type="term" value="P:protein targeting to Golgi apparatus"/>
    <property type="evidence" value="ECO:0000315"/>
    <property type="project" value="UniProtKB"/>
</dbReference>
<dbReference type="GO" id="GO:0045467">
    <property type="term" value="P:R7 cell development"/>
    <property type="evidence" value="ECO:0000315"/>
    <property type="project" value="FlyBase"/>
</dbReference>
<dbReference type="GO" id="GO:0032482">
    <property type="term" value="P:Rab protein signal transduction"/>
    <property type="evidence" value="ECO:0000250"/>
    <property type="project" value="FlyBase"/>
</dbReference>
<dbReference type="GO" id="GO:0001881">
    <property type="term" value="P:receptor recycling"/>
    <property type="evidence" value="ECO:0000315"/>
    <property type="project" value="FlyBase"/>
</dbReference>
<dbReference type="GO" id="GO:0060078">
    <property type="term" value="P:regulation of postsynaptic membrane potential"/>
    <property type="evidence" value="ECO:0000315"/>
    <property type="project" value="FlyBase"/>
</dbReference>
<dbReference type="GO" id="GO:0042147">
    <property type="term" value="P:retrograde transport, endosome to Golgi"/>
    <property type="evidence" value="ECO:0000318"/>
    <property type="project" value="GO_Central"/>
</dbReference>
<dbReference type="GO" id="GO:0006890">
    <property type="term" value="P:retrograde vesicle-mediated transport, Golgi to endoplasmic reticulum"/>
    <property type="evidence" value="ECO:0000318"/>
    <property type="project" value="GO_Central"/>
</dbReference>
<dbReference type="GO" id="GO:0016192">
    <property type="term" value="P:vesicle-mediated transport"/>
    <property type="evidence" value="ECO:0000250"/>
    <property type="project" value="FlyBase"/>
</dbReference>
<dbReference type="CDD" id="cd01861">
    <property type="entry name" value="Rab6"/>
    <property type="match status" value="1"/>
</dbReference>
<dbReference type="FunFam" id="3.40.50.300:FF:000139">
    <property type="entry name" value="ras-related protein Rab-6A isoform X1"/>
    <property type="match status" value="1"/>
</dbReference>
<dbReference type="Gene3D" id="3.40.50.300">
    <property type="entry name" value="P-loop containing nucleotide triphosphate hydrolases"/>
    <property type="match status" value="1"/>
</dbReference>
<dbReference type="InterPro" id="IPR027417">
    <property type="entry name" value="P-loop_NTPase"/>
</dbReference>
<dbReference type="InterPro" id="IPR050227">
    <property type="entry name" value="Rab"/>
</dbReference>
<dbReference type="InterPro" id="IPR005225">
    <property type="entry name" value="Small_GTP-bd"/>
</dbReference>
<dbReference type="InterPro" id="IPR001806">
    <property type="entry name" value="Small_GTPase"/>
</dbReference>
<dbReference type="NCBIfam" id="TIGR00231">
    <property type="entry name" value="small_GTP"/>
    <property type="match status" value="1"/>
</dbReference>
<dbReference type="PANTHER" id="PTHR47977">
    <property type="entry name" value="RAS-RELATED PROTEIN RAB"/>
    <property type="match status" value="1"/>
</dbReference>
<dbReference type="Pfam" id="PF00071">
    <property type="entry name" value="Ras"/>
    <property type="match status" value="1"/>
</dbReference>
<dbReference type="PRINTS" id="PR00449">
    <property type="entry name" value="RASTRNSFRMNG"/>
</dbReference>
<dbReference type="SMART" id="SM00175">
    <property type="entry name" value="RAB"/>
    <property type="match status" value="1"/>
</dbReference>
<dbReference type="SMART" id="SM00176">
    <property type="entry name" value="RAN"/>
    <property type="match status" value="1"/>
</dbReference>
<dbReference type="SMART" id="SM00173">
    <property type="entry name" value="RAS"/>
    <property type="match status" value="1"/>
</dbReference>
<dbReference type="SMART" id="SM00174">
    <property type="entry name" value="RHO"/>
    <property type="match status" value="1"/>
</dbReference>
<dbReference type="SUPFAM" id="SSF52540">
    <property type="entry name" value="P-loop containing nucleoside triphosphate hydrolases"/>
    <property type="match status" value="1"/>
</dbReference>
<dbReference type="PROSITE" id="PS51419">
    <property type="entry name" value="RAB"/>
    <property type="match status" value="1"/>
</dbReference>
<reference evidence="20" key="1">
    <citation type="journal article" date="1997" name="FEBS Lett.">
        <title>Rab proteins of Drosophila melanogaster: novel members of the Rab-protein family.</title>
        <authorList>
            <person name="Satoh A.K."/>
            <person name="Tokunaga F."/>
            <person name="Ozaki K."/>
        </authorList>
    </citation>
    <scope>NUCLEOTIDE SEQUENCE [MRNA]</scope>
    <source>
        <strain evidence="20">Oregon-R</strain>
        <tissue evidence="20">Head</tissue>
    </source>
</reference>
<reference evidence="17" key="2">
    <citation type="journal article" date="1998" name="J. Biol. Chem.">
        <title>Rab6 regulation of rhodopsin transport in Drosophila.</title>
        <authorList>
            <person name="Shetty K.M."/>
            <person name="Kurada P."/>
            <person name="O'Tousa J.E."/>
        </authorList>
    </citation>
    <scope>NUCLEOTIDE SEQUENCE [GENOMIC DNA]</scope>
    <scope>FUNCTION</scope>
    <scope>MUTAGENESIS OF GLN-71 AND ASN-125</scope>
</reference>
<reference evidence="17" key="3">
    <citation type="journal article" date="1999" name="J. Cell Biol.">
        <title>The developmental role of warthog, the notch modifier encoding Drab6.</title>
        <authorList>
            <person name="Purcell K."/>
            <person name="Artavanis-Tsakonas S."/>
        </authorList>
    </citation>
    <scope>NUCLEOTIDE SEQUENCE [MRNA]</scope>
    <scope>FUNCTION</scope>
    <scope>DISRUPTION PHENOTYPE</scope>
    <scope>MUTAGENESIS OF ARG-62 AND GLN-71</scope>
    <source>
        <tissue evidence="4">Embryo</tissue>
        <tissue evidence="4">Imaginal disk</tissue>
    </source>
</reference>
<reference evidence="18" key="4">
    <citation type="journal article" date="2000" name="Science">
        <title>The genome sequence of Drosophila melanogaster.</title>
        <authorList>
            <person name="Adams M.D."/>
            <person name="Celniker S.E."/>
            <person name="Holt R.A."/>
            <person name="Evans C.A."/>
            <person name="Gocayne J.D."/>
            <person name="Amanatides P.G."/>
            <person name="Scherer S.E."/>
            <person name="Li P.W."/>
            <person name="Hoskins R.A."/>
            <person name="Galle R.F."/>
            <person name="George R.A."/>
            <person name="Lewis S.E."/>
            <person name="Richards S."/>
            <person name="Ashburner M."/>
            <person name="Henderson S.N."/>
            <person name="Sutton G.G."/>
            <person name="Wortman J.R."/>
            <person name="Yandell M.D."/>
            <person name="Zhang Q."/>
            <person name="Chen L.X."/>
            <person name="Brandon R.C."/>
            <person name="Rogers Y.-H.C."/>
            <person name="Blazej R.G."/>
            <person name="Champe M."/>
            <person name="Pfeiffer B.D."/>
            <person name="Wan K.H."/>
            <person name="Doyle C."/>
            <person name="Baxter E.G."/>
            <person name="Helt G."/>
            <person name="Nelson C.R."/>
            <person name="Miklos G.L.G."/>
            <person name="Abril J.F."/>
            <person name="Agbayani A."/>
            <person name="An H.-J."/>
            <person name="Andrews-Pfannkoch C."/>
            <person name="Baldwin D."/>
            <person name="Ballew R.M."/>
            <person name="Basu A."/>
            <person name="Baxendale J."/>
            <person name="Bayraktaroglu L."/>
            <person name="Beasley E.M."/>
            <person name="Beeson K.Y."/>
            <person name="Benos P.V."/>
            <person name="Berman B.P."/>
            <person name="Bhandari D."/>
            <person name="Bolshakov S."/>
            <person name="Borkova D."/>
            <person name="Botchan M.R."/>
            <person name="Bouck J."/>
            <person name="Brokstein P."/>
            <person name="Brottier P."/>
            <person name="Burtis K.C."/>
            <person name="Busam D.A."/>
            <person name="Butler H."/>
            <person name="Cadieu E."/>
            <person name="Center A."/>
            <person name="Chandra I."/>
            <person name="Cherry J.M."/>
            <person name="Cawley S."/>
            <person name="Dahlke C."/>
            <person name="Davenport L.B."/>
            <person name="Davies P."/>
            <person name="de Pablos B."/>
            <person name="Delcher A."/>
            <person name="Deng Z."/>
            <person name="Mays A.D."/>
            <person name="Dew I."/>
            <person name="Dietz S.M."/>
            <person name="Dodson K."/>
            <person name="Doup L.E."/>
            <person name="Downes M."/>
            <person name="Dugan-Rocha S."/>
            <person name="Dunkov B.C."/>
            <person name="Dunn P."/>
            <person name="Durbin K.J."/>
            <person name="Evangelista C.C."/>
            <person name="Ferraz C."/>
            <person name="Ferriera S."/>
            <person name="Fleischmann W."/>
            <person name="Fosler C."/>
            <person name="Gabrielian A.E."/>
            <person name="Garg N.S."/>
            <person name="Gelbart W.M."/>
            <person name="Glasser K."/>
            <person name="Glodek A."/>
            <person name="Gong F."/>
            <person name="Gorrell J.H."/>
            <person name="Gu Z."/>
            <person name="Guan P."/>
            <person name="Harris M."/>
            <person name="Harris N.L."/>
            <person name="Harvey D.A."/>
            <person name="Heiman T.J."/>
            <person name="Hernandez J.R."/>
            <person name="Houck J."/>
            <person name="Hostin D."/>
            <person name="Houston K.A."/>
            <person name="Howland T.J."/>
            <person name="Wei M.-H."/>
            <person name="Ibegwam C."/>
            <person name="Jalali M."/>
            <person name="Kalush F."/>
            <person name="Karpen G.H."/>
            <person name="Ke Z."/>
            <person name="Kennison J.A."/>
            <person name="Ketchum K.A."/>
            <person name="Kimmel B.E."/>
            <person name="Kodira C.D."/>
            <person name="Kraft C.L."/>
            <person name="Kravitz S."/>
            <person name="Kulp D."/>
            <person name="Lai Z."/>
            <person name="Lasko P."/>
            <person name="Lei Y."/>
            <person name="Levitsky A.A."/>
            <person name="Li J.H."/>
            <person name="Li Z."/>
            <person name="Liang Y."/>
            <person name="Lin X."/>
            <person name="Liu X."/>
            <person name="Mattei B."/>
            <person name="McIntosh T.C."/>
            <person name="McLeod M.P."/>
            <person name="McPherson D."/>
            <person name="Merkulov G."/>
            <person name="Milshina N.V."/>
            <person name="Mobarry C."/>
            <person name="Morris J."/>
            <person name="Moshrefi A."/>
            <person name="Mount S.M."/>
            <person name="Moy M."/>
            <person name="Murphy B."/>
            <person name="Murphy L."/>
            <person name="Muzny D.M."/>
            <person name="Nelson D.L."/>
            <person name="Nelson D.R."/>
            <person name="Nelson K.A."/>
            <person name="Nixon K."/>
            <person name="Nusskern D.R."/>
            <person name="Pacleb J.M."/>
            <person name="Palazzolo M."/>
            <person name="Pittman G.S."/>
            <person name="Pan S."/>
            <person name="Pollard J."/>
            <person name="Puri V."/>
            <person name="Reese M.G."/>
            <person name="Reinert K."/>
            <person name="Remington K."/>
            <person name="Saunders R.D.C."/>
            <person name="Scheeler F."/>
            <person name="Shen H."/>
            <person name="Shue B.C."/>
            <person name="Siden-Kiamos I."/>
            <person name="Simpson M."/>
            <person name="Skupski M.P."/>
            <person name="Smith T.J."/>
            <person name="Spier E."/>
            <person name="Spradling A.C."/>
            <person name="Stapleton M."/>
            <person name="Strong R."/>
            <person name="Sun E."/>
            <person name="Svirskas R."/>
            <person name="Tector C."/>
            <person name="Turner R."/>
            <person name="Venter E."/>
            <person name="Wang A.H."/>
            <person name="Wang X."/>
            <person name="Wang Z.-Y."/>
            <person name="Wassarman D.A."/>
            <person name="Weinstock G.M."/>
            <person name="Weissenbach J."/>
            <person name="Williams S.M."/>
            <person name="Woodage T."/>
            <person name="Worley K.C."/>
            <person name="Wu D."/>
            <person name="Yang S."/>
            <person name="Yao Q.A."/>
            <person name="Ye J."/>
            <person name="Yeh R.-F."/>
            <person name="Zaveri J.S."/>
            <person name="Zhan M."/>
            <person name="Zhang G."/>
            <person name="Zhao Q."/>
            <person name="Zheng L."/>
            <person name="Zheng X.H."/>
            <person name="Zhong F.N."/>
            <person name="Zhong W."/>
            <person name="Zhou X."/>
            <person name="Zhu S.C."/>
            <person name="Zhu X."/>
            <person name="Smith H.O."/>
            <person name="Gibbs R.A."/>
            <person name="Myers E.W."/>
            <person name="Rubin G.M."/>
            <person name="Venter J.C."/>
        </authorList>
    </citation>
    <scope>NUCLEOTIDE SEQUENCE [LARGE SCALE GENOMIC DNA]</scope>
    <source>
        <strain>Berkeley</strain>
    </source>
</reference>
<reference evidence="18" key="5">
    <citation type="journal article" date="2002" name="Genome Biol.">
        <title>Annotation of the Drosophila melanogaster euchromatic genome: a systematic review.</title>
        <authorList>
            <person name="Misra S."/>
            <person name="Crosby M.A."/>
            <person name="Mungall C.J."/>
            <person name="Matthews B.B."/>
            <person name="Campbell K.S."/>
            <person name="Hradecky P."/>
            <person name="Huang Y."/>
            <person name="Kaminker J.S."/>
            <person name="Millburn G.H."/>
            <person name="Prochnik S.E."/>
            <person name="Smith C.D."/>
            <person name="Tupy J.L."/>
            <person name="Whitfield E.J."/>
            <person name="Bayraktaroglu L."/>
            <person name="Berman B.P."/>
            <person name="Bettencourt B.R."/>
            <person name="Celniker S.E."/>
            <person name="de Grey A.D.N.J."/>
            <person name="Drysdale R.A."/>
            <person name="Harris N.L."/>
            <person name="Richter J."/>
            <person name="Russo S."/>
            <person name="Schroeder A.J."/>
            <person name="Shu S.Q."/>
            <person name="Stapleton M."/>
            <person name="Yamada C."/>
            <person name="Ashburner M."/>
            <person name="Gelbart W.M."/>
            <person name="Rubin G.M."/>
            <person name="Lewis S.E."/>
        </authorList>
    </citation>
    <scope>GENOME REANNOTATION</scope>
    <source>
        <strain>Berkeley</strain>
    </source>
</reference>
<reference evidence="19" key="6">
    <citation type="journal article" date="2002" name="Genome Biol.">
        <title>A Drosophila full-length cDNA resource.</title>
        <authorList>
            <person name="Stapleton M."/>
            <person name="Carlson J.W."/>
            <person name="Brokstein P."/>
            <person name="Yu C."/>
            <person name="Champe M."/>
            <person name="George R.A."/>
            <person name="Guarin H."/>
            <person name="Kronmiller B."/>
            <person name="Pacleb J.M."/>
            <person name="Park S."/>
            <person name="Wan K.H."/>
            <person name="Rubin G.M."/>
            <person name="Celniker S.E."/>
        </authorList>
    </citation>
    <scope>NUCLEOTIDE SEQUENCE [LARGE SCALE MRNA]</scope>
    <source>
        <strain evidence="19">Berkeley</strain>
        <tissue evidence="5">Head</tissue>
    </source>
</reference>
<reference evidence="17" key="7">
    <citation type="journal article" date="2007" name="Development">
        <title>Rab6 mediates membrane organization and determinant localization during Drosophila oogenesis.</title>
        <authorList>
            <person name="Coutelis J.B."/>
            <person name="Ephrussi A."/>
        </authorList>
    </citation>
    <scope>FUNCTION</scope>
    <scope>INTERACTION WITH BICD</scope>
</reference>
<reference evidence="17" key="8">
    <citation type="journal article" date="2007" name="Development">
        <title>Rab6 and the secretory pathway affect oocyte polarity in Drosophila.</title>
        <authorList>
            <person name="Januschke J."/>
            <person name="Nicolas E."/>
            <person name="Compagnon J."/>
            <person name="Formstecher E."/>
            <person name="Goud B."/>
            <person name="Guichet A."/>
        </authorList>
    </citation>
    <scope>FUNCTION</scope>
    <scope>SUBCELLULAR LOCATION</scope>
    <scope>INTERACTION WITH BICD</scope>
</reference>
<reference evidence="17" key="9">
    <citation type="journal article" date="2008" name="J. Cell Biol.">
        <title>Golgi coiled-coil proteins contain multiple binding sites for Rab family G proteins.</title>
        <authorList>
            <person name="Sinka R."/>
            <person name="Gillingham A.K."/>
            <person name="Kondylis V."/>
            <person name="Munro S."/>
        </authorList>
    </citation>
    <scope>INTERACTION WITH GCC1/CG10703 AND CBS</scope>
</reference>
<reference evidence="17" key="10">
    <citation type="journal article" date="2008" name="PLoS Pathog.">
        <title>Identification and functional analysis of antifungal immune response genes in Drosophila.</title>
        <authorList>
            <person name="Jin L.H."/>
            <person name="Shim J."/>
            <person name="Yoon J.S."/>
            <person name="Kim B."/>
            <person name="Kim J."/>
            <person name="Kim-Ha J."/>
            <person name="Kim Y.J."/>
        </authorList>
    </citation>
    <scope>FUNCTION</scope>
</reference>
<reference evidence="17" key="11">
    <citation type="journal article" date="2011" name="Curr. Biol.">
        <title>Systematic discovery of Rab GTPases with synaptic functions in Drosophila.</title>
        <authorList>
            <person name="Chan C.C."/>
            <person name="Scoggin S."/>
            <person name="Wang D."/>
            <person name="Cherry S."/>
            <person name="Dembo T."/>
            <person name="Greenberg B."/>
            <person name="Jin E.J."/>
            <person name="Kuey C."/>
            <person name="Lopez A."/>
            <person name="Mehta S.Q."/>
            <person name="Perkins T.J."/>
            <person name="Brankatschk M."/>
            <person name="Rothenfluh A."/>
            <person name="Buszczak M."/>
            <person name="Hiesinger P.R."/>
        </authorList>
    </citation>
    <scope>TISSUE SPECIFICITY</scope>
</reference>
<reference evidence="17" key="12">
    <citation type="journal article" date="2011" name="Neuron">
        <title>Rich regulates target specificity of photoreceptor cells and N-cadherin trafficking in the Drosophila visual system via Rab6.</title>
        <authorList>
            <person name="Tong C."/>
            <person name="Ohyama T."/>
            <person name="Tien A.C."/>
            <person name="Rajan A."/>
            <person name="Haueter C.M."/>
            <person name="Bellen H.J."/>
        </authorList>
    </citation>
    <scope>FUNCTION</scope>
    <scope>INTERACTION WITH RICH</scope>
    <scope>SUBCELLULAR LOCATION</scope>
    <scope>TISSUE SPECIFICITY</scope>
    <scope>DISRUPTION PHENOTYPE</scope>
    <scope>MUTAGENESIS OF THR-26 AND GLN-71</scope>
</reference>
<reference evidence="17" key="13">
    <citation type="journal article" date="2012" name="J. Proteome Res.">
        <title>Involvement of Rab6 in the regulation of phagocytosis against virus infection in invertebrates.</title>
        <authorList>
            <person name="Ye T."/>
            <person name="Tang W."/>
            <person name="Zhang X."/>
        </authorList>
    </citation>
    <scope>FUNCTION</scope>
    <scope>INTERACTION WITH ACT5C</scope>
</reference>
<reference key="14">
    <citation type="journal article" date="2021" name="Elife">
        <title>The dimeric Golgi protein Gorab binds to Sas6 as a monomer to mediate centriole duplication.</title>
        <authorList>
            <person name="Fatalska A."/>
            <person name="Stepinac E."/>
            <person name="Richter M."/>
            <person name="Kovacs L."/>
            <person name="Pietras Z."/>
            <person name="Puchinger M."/>
            <person name="Dong G."/>
            <person name="Dadlez M."/>
            <person name="Glover D.M."/>
        </authorList>
    </citation>
    <scope>FUNCTION</scope>
    <scope>INTERACTION WITH GORAB</scope>
</reference>
<reference evidence="22" key="15">
    <citation type="journal article" date="2011" name="Acta Crystallogr. F">
        <title>Structure of the Drosophila melanogaster Rab6 GTPase at 1.4A resolution.</title>
        <authorList>
            <person name="Walden M."/>
            <person name="Jenkins H.T."/>
            <person name="Edwards T.A."/>
        </authorList>
    </citation>
    <scope>X-RAY CRYSTALLOGRAPHY (1.39 ANGSTROMS) OF 1-177 IN COMPLEX WITH GTP-ANALOG</scope>
</reference>
<feature type="chain" id="PRO_0000425445" description="Ras-related protein Rab6">
    <location>
        <begin position="1"/>
        <end position="208"/>
    </location>
</feature>
<feature type="region of interest" description="Disordered" evidence="3">
    <location>
        <begin position="176"/>
        <end position="208"/>
    </location>
</feature>
<feature type="short sequence motif" description="Effector region" evidence="1">
    <location>
        <begin position="41"/>
        <end position="49"/>
    </location>
</feature>
<feature type="compositionally biased region" description="Basic and acidic residues" evidence="3">
    <location>
        <begin position="179"/>
        <end position="208"/>
    </location>
</feature>
<feature type="binding site">
    <location>
        <begin position="19"/>
        <end position="27"/>
    </location>
    <ligand>
        <name>GTP</name>
        <dbReference type="ChEBI" id="CHEBI:37565"/>
    </ligand>
</feature>
<feature type="binding site">
    <location>
        <begin position="67"/>
        <end position="71"/>
    </location>
    <ligand>
        <name>GTP</name>
        <dbReference type="ChEBI" id="CHEBI:37565"/>
    </ligand>
</feature>
<feature type="binding site">
    <location>
        <begin position="125"/>
        <end position="128"/>
    </location>
    <ligand>
        <name>GTP</name>
        <dbReference type="ChEBI" id="CHEBI:37565"/>
    </ligand>
</feature>
<feature type="binding site">
    <location>
        <begin position="155"/>
        <end position="157"/>
    </location>
    <ligand>
        <name>GTP</name>
        <dbReference type="ChEBI" id="CHEBI:37565"/>
    </ligand>
</feature>
<feature type="mutagenesis site" description="Does not affect interaction with Rich." evidence="11">
    <original>T</original>
    <variation>N</variation>
    <location>
        <position position="26"/>
    </location>
</feature>
<feature type="mutagenesis site" description="Produces short bristles but does not alter the direction of their growth." evidence="4">
    <original>R</original>
    <variation>C</variation>
    <location>
        <position position="62"/>
    </location>
</feature>
<feature type="mutagenesis site" description="Impairs maturation of ninaE and Rh3. Causes accumulation of membranes at the base of the rhabdomeres and retinal degeneration. Abolishes interaction with Rich. Alters direction of bristle growth and produces aberrations in the circumferential ridges." evidence="4 11 15">
    <original>Q</original>
    <variation>L</variation>
    <location>
        <position position="71"/>
    </location>
</feature>
<feature type="mutagenesis site" description="Does not affect maturation of ninaE or Rh3. Does not cause accumulation of membranes at the base of the rhabdomeres or retinal degeneration." evidence="15">
    <original>N</original>
    <variation>I</variation>
    <location>
        <position position="125"/>
    </location>
</feature>
<feature type="strand" evidence="23">
    <location>
        <begin position="11"/>
        <end position="20"/>
    </location>
</feature>
<feature type="helix" evidence="23">
    <location>
        <begin position="25"/>
        <end position="34"/>
    </location>
</feature>
<feature type="strand" evidence="23">
    <location>
        <begin position="46"/>
        <end position="56"/>
    </location>
</feature>
<feature type="strand" evidence="23">
    <location>
        <begin position="59"/>
        <end position="68"/>
    </location>
</feature>
<feature type="helix" evidence="23">
    <location>
        <begin position="72"/>
        <end position="77"/>
    </location>
</feature>
<feature type="helix" evidence="23">
    <location>
        <begin position="79"/>
        <end position="83"/>
    </location>
</feature>
<feature type="strand" evidence="23">
    <location>
        <begin position="86"/>
        <end position="93"/>
    </location>
</feature>
<feature type="helix" evidence="23">
    <location>
        <begin position="97"/>
        <end position="101"/>
    </location>
</feature>
<feature type="helix" evidence="23">
    <location>
        <begin position="103"/>
        <end position="114"/>
    </location>
</feature>
<feature type="strand" evidence="23">
    <location>
        <begin position="117"/>
        <end position="125"/>
    </location>
</feature>
<feature type="helix" evidence="23">
    <location>
        <begin position="127"/>
        <end position="132"/>
    </location>
</feature>
<feature type="helix" evidence="23">
    <location>
        <begin position="137"/>
        <end position="147"/>
    </location>
</feature>
<feature type="strand" evidence="23">
    <location>
        <begin position="150"/>
        <end position="155"/>
    </location>
</feature>
<feature type="turn" evidence="23">
    <location>
        <begin position="156"/>
        <end position="159"/>
    </location>
</feature>
<feature type="helix" evidence="23">
    <location>
        <begin position="162"/>
        <end position="171"/>
    </location>
</feature>
<evidence type="ECO:0000250" key="1">
    <source>
        <dbReference type="UniProtKB" id="P20340"/>
    </source>
</evidence>
<evidence type="ECO:0000255" key="2"/>
<evidence type="ECO:0000256" key="3">
    <source>
        <dbReference type="SAM" id="MobiDB-lite"/>
    </source>
</evidence>
<evidence type="ECO:0000269" key="4">
    <source>
    </source>
</evidence>
<evidence type="ECO:0000269" key="5">
    <source>
    </source>
</evidence>
<evidence type="ECO:0000269" key="6">
    <source>
    </source>
</evidence>
<evidence type="ECO:0000269" key="7">
    <source>
    </source>
</evidence>
<evidence type="ECO:0000269" key="8">
    <source>
    </source>
</evidence>
<evidence type="ECO:0000269" key="9">
    <source>
    </source>
</evidence>
<evidence type="ECO:0000269" key="10">
    <source>
    </source>
</evidence>
<evidence type="ECO:0000269" key="11">
    <source>
    </source>
</evidence>
<evidence type="ECO:0000269" key="12">
    <source>
    </source>
</evidence>
<evidence type="ECO:0000269" key="13">
    <source>
    </source>
</evidence>
<evidence type="ECO:0000269" key="14">
    <source>
    </source>
</evidence>
<evidence type="ECO:0000269" key="15">
    <source>
    </source>
</evidence>
<evidence type="ECO:0000303" key="16">
    <source>
    </source>
</evidence>
<evidence type="ECO:0000305" key="17"/>
<evidence type="ECO:0000312" key="18">
    <source>
        <dbReference type="EMBL" id="AAF53168.1"/>
    </source>
</evidence>
<evidence type="ECO:0000312" key="19">
    <source>
        <dbReference type="EMBL" id="AAL25300.1"/>
    </source>
</evidence>
<evidence type="ECO:0000312" key="20">
    <source>
        <dbReference type="EMBL" id="BAA21707.1"/>
    </source>
</evidence>
<evidence type="ECO:0000312" key="21">
    <source>
        <dbReference type="FlyBase" id="FBgn0015797"/>
    </source>
</evidence>
<evidence type="ECO:0000312" key="22">
    <source>
        <dbReference type="PDB" id="2Y8E"/>
    </source>
</evidence>
<evidence type="ECO:0007829" key="23">
    <source>
        <dbReference type="PDB" id="2Y8E"/>
    </source>
</evidence>
<sequence length="208" mass="23480">MSSGDFGNPLRKFKLVFLGEQSVGKTSLITRFMYDSFDNTYQATIGIDFLSKTMYLEDRTVRLQLWDTAGQERFRSLIPSYIRDSTVAVVVYDITNTNSFHQTSKWIDDVRTERGSDVIIMLVGNKTDLSDKRQVSTEEGERKAKELNVMFIETSAKAGYNVKQLFRRVAAALPGMDSTENKPSEDMQEVVLKDSPNETKDPEGGCAC</sequence>
<protein>
    <recommendedName>
        <fullName evidence="18">Ras-related protein Rab6</fullName>
    </recommendedName>
    <alternativeName>
        <fullName evidence="16">Protein warthog</fullName>
    </alternativeName>
</protein>
<organism>
    <name type="scientific">Drosophila melanogaster</name>
    <name type="common">Fruit fly</name>
    <dbReference type="NCBI Taxonomy" id="7227"/>
    <lineage>
        <taxon>Eukaryota</taxon>
        <taxon>Metazoa</taxon>
        <taxon>Ecdysozoa</taxon>
        <taxon>Arthropoda</taxon>
        <taxon>Hexapoda</taxon>
        <taxon>Insecta</taxon>
        <taxon>Pterygota</taxon>
        <taxon>Neoptera</taxon>
        <taxon>Endopterygota</taxon>
        <taxon>Diptera</taxon>
        <taxon>Brachycera</taxon>
        <taxon>Muscomorpha</taxon>
        <taxon>Ephydroidea</taxon>
        <taxon>Drosophilidae</taxon>
        <taxon>Drosophila</taxon>
        <taxon>Sophophora</taxon>
    </lineage>
</organism>
<accession>O18334</accession>
<proteinExistence type="evidence at protein level"/>
<name>RAB6_DROME</name>
<gene>
    <name evidence="18 21" type="primary">Rab6</name>
    <name evidence="16" type="synonym">wrt</name>
    <name type="ORF">CG6601</name>
</gene>
<keyword id="KW-0002">3D-structure</keyword>
<keyword id="KW-0009">Actin-binding</keyword>
<keyword id="KW-0931">ER-Golgi transport</keyword>
<keyword id="KW-0333">Golgi apparatus</keyword>
<keyword id="KW-0342">GTP-binding</keyword>
<keyword id="KW-0472">Membrane</keyword>
<keyword id="KW-0547">Nucleotide-binding</keyword>
<keyword id="KW-1185">Reference proteome</keyword>
<keyword id="KW-0770">Synapse</keyword>
<keyword id="KW-0813">Transport</keyword>